<gene>
    <name type="primary">tbpB</name>
    <name evidence="8" type="synonym">tbp2</name>
</gene>
<name>TBPB1_NEIMI</name>
<feature type="signal peptide">
    <location>
        <begin position="1"/>
        <end position="20"/>
    </location>
</feature>
<feature type="chain" id="PRO_0000018194" description="Transferrin-binding protein B">
    <location>
        <begin position="21"/>
        <end position="711"/>
    </location>
</feature>
<feature type="region of interest" description="Disordered" evidence="3">
    <location>
        <begin position="33"/>
        <end position="58"/>
    </location>
</feature>
<feature type="region of interest" description="Disordered" evidence="3">
    <location>
        <begin position="79"/>
        <end position="105"/>
    </location>
</feature>
<feature type="region of interest" description="Disordered" evidence="3">
    <location>
        <begin position="118"/>
        <end position="146"/>
    </location>
</feature>
<feature type="region of interest" description="Disordered" evidence="3">
    <location>
        <begin position="225"/>
        <end position="251"/>
    </location>
</feature>
<feature type="region of interest" description="Disordered" evidence="3">
    <location>
        <begin position="370"/>
        <end position="396"/>
    </location>
</feature>
<feature type="region of interest" description="Disordered" evidence="3">
    <location>
        <begin position="437"/>
        <end position="492"/>
    </location>
</feature>
<feature type="region of interest" description="Disordered" evidence="3">
    <location>
        <begin position="682"/>
        <end position="711"/>
    </location>
</feature>
<feature type="compositionally biased region" description="Polar residues" evidence="3">
    <location>
        <begin position="46"/>
        <end position="56"/>
    </location>
</feature>
<feature type="compositionally biased region" description="Basic and acidic residues" evidence="3">
    <location>
        <begin position="96"/>
        <end position="105"/>
    </location>
</feature>
<feature type="compositionally biased region" description="Polar residues" evidence="3">
    <location>
        <begin position="119"/>
        <end position="146"/>
    </location>
</feature>
<feature type="compositionally biased region" description="Low complexity" evidence="3">
    <location>
        <begin position="373"/>
        <end position="393"/>
    </location>
</feature>
<feature type="compositionally biased region" description="Basic and acidic residues" evidence="3">
    <location>
        <begin position="457"/>
        <end position="472"/>
    </location>
</feature>
<feature type="compositionally biased region" description="Polar residues" evidence="3">
    <location>
        <begin position="474"/>
        <end position="492"/>
    </location>
</feature>
<feature type="compositionally biased region" description="Polar residues" evidence="3">
    <location>
        <begin position="684"/>
        <end position="699"/>
    </location>
</feature>
<feature type="lipid moiety-binding region" description="N-palmitoyl cysteine" evidence="9">
    <location>
        <position position="21"/>
    </location>
</feature>
<feature type="lipid moiety-binding region" description="S-diacylglycerol cysteine" evidence="9">
    <location>
        <position position="21"/>
    </location>
</feature>
<feature type="mutagenesis site" description="Wild-type binding to human transferrin." evidence="5">
    <original>R</original>
    <variation>A</variation>
    <location>
        <position position="219"/>
    </location>
</feature>
<feature type="mutagenesis site" description="Dramatically reduced binding to human transferrin." evidence="5">
    <original>E</original>
    <variation>R</variation>
    <location>
        <position position="241"/>
    </location>
</feature>
<feature type="strand" evidence="16">
    <location>
        <begin position="61"/>
        <end position="66"/>
    </location>
</feature>
<feature type="turn" evidence="15">
    <location>
        <begin position="74"/>
        <end position="76"/>
    </location>
</feature>
<feature type="strand" evidence="16">
    <location>
        <begin position="79"/>
        <end position="81"/>
    </location>
</feature>
<feature type="helix" evidence="16">
    <location>
        <begin position="85"/>
        <end position="87"/>
    </location>
</feature>
<feature type="helix" evidence="16">
    <location>
        <begin position="102"/>
        <end position="110"/>
    </location>
</feature>
<feature type="strand" evidence="15">
    <location>
        <begin position="113"/>
        <end position="115"/>
    </location>
</feature>
<feature type="strand" evidence="15">
    <location>
        <begin position="119"/>
        <end position="121"/>
    </location>
</feature>
<feature type="strand" evidence="16">
    <location>
        <begin position="153"/>
        <end position="162"/>
    </location>
</feature>
<feature type="strand" evidence="16">
    <location>
        <begin position="167"/>
        <end position="169"/>
    </location>
</feature>
<feature type="turn" evidence="16">
    <location>
        <begin position="170"/>
        <end position="173"/>
    </location>
</feature>
<feature type="strand" evidence="16">
    <location>
        <begin position="174"/>
        <end position="176"/>
    </location>
</feature>
<feature type="strand" evidence="16">
    <location>
        <begin position="180"/>
        <end position="190"/>
    </location>
</feature>
<feature type="strand" evidence="16">
    <location>
        <begin position="192"/>
        <end position="197"/>
    </location>
</feature>
<feature type="strand" evidence="16">
    <location>
        <begin position="199"/>
        <end position="210"/>
    </location>
</feature>
<feature type="turn" evidence="16">
    <location>
        <begin position="219"/>
        <end position="221"/>
    </location>
</feature>
<feature type="turn" evidence="16">
    <location>
        <begin position="228"/>
        <end position="230"/>
    </location>
</feature>
<feature type="strand" evidence="16">
    <location>
        <begin position="243"/>
        <end position="245"/>
    </location>
</feature>
<feature type="strand" evidence="16">
    <location>
        <begin position="257"/>
        <end position="267"/>
    </location>
</feature>
<feature type="turn" evidence="16">
    <location>
        <begin position="268"/>
        <end position="271"/>
    </location>
</feature>
<feature type="strand" evidence="16">
    <location>
        <begin position="272"/>
        <end position="281"/>
    </location>
</feature>
<feature type="helix" evidence="15">
    <location>
        <begin position="288"/>
        <end position="290"/>
    </location>
</feature>
<feature type="strand" evidence="16">
    <location>
        <begin position="294"/>
        <end position="305"/>
    </location>
</feature>
<feature type="strand" evidence="16">
    <location>
        <begin position="308"/>
        <end position="317"/>
    </location>
</feature>
<feature type="strand" evidence="16">
    <location>
        <begin position="319"/>
        <end position="322"/>
    </location>
</feature>
<feature type="strand" evidence="16">
    <location>
        <begin position="325"/>
        <end position="327"/>
    </location>
</feature>
<feature type="strand" evidence="16">
    <location>
        <begin position="332"/>
        <end position="341"/>
    </location>
</feature>
<feature type="strand" evidence="16">
    <location>
        <begin position="346"/>
        <end position="352"/>
    </location>
</feature>
<feature type="strand" evidence="16">
    <location>
        <begin position="356"/>
        <end position="366"/>
    </location>
</feature>
<feature type="strand" evidence="16">
    <location>
        <begin position="398"/>
        <end position="400"/>
    </location>
</feature>
<feature type="strand" evidence="17">
    <location>
        <begin position="402"/>
        <end position="408"/>
    </location>
</feature>
<feature type="turn" evidence="17">
    <location>
        <begin position="409"/>
        <end position="412"/>
    </location>
</feature>
<feature type="strand" evidence="17">
    <location>
        <begin position="413"/>
        <end position="416"/>
    </location>
</feature>
<feature type="strand" evidence="17">
    <location>
        <begin position="425"/>
        <end position="428"/>
    </location>
</feature>
<feature type="strand" evidence="17">
    <location>
        <begin position="431"/>
        <end position="434"/>
    </location>
</feature>
<feature type="strand" evidence="17">
    <location>
        <begin position="458"/>
        <end position="464"/>
    </location>
</feature>
<feature type="strand" evidence="17">
    <location>
        <begin position="497"/>
        <end position="503"/>
    </location>
</feature>
<feature type="strand" evidence="17">
    <location>
        <begin position="508"/>
        <end position="519"/>
    </location>
</feature>
<feature type="strand" evidence="17">
    <location>
        <begin position="541"/>
        <end position="550"/>
    </location>
</feature>
<feature type="helix" evidence="17">
    <location>
        <begin position="553"/>
        <end position="555"/>
    </location>
</feature>
<feature type="strand" evidence="17">
    <location>
        <begin position="560"/>
        <end position="580"/>
    </location>
</feature>
<feature type="strand" evidence="17">
    <location>
        <begin position="588"/>
        <end position="596"/>
    </location>
</feature>
<feature type="turn" evidence="17">
    <location>
        <begin position="597"/>
        <end position="600"/>
    </location>
</feature>
<feature type="strand" evidence="17">
    <location>
        <begin position="601"/>
        <end position="607"/>
    </location>
</feature>
<feature type="turn" evidence="15">
    <location>
        <begin position="611"/>
        <end position="613"/>
    </location>
</feature>
<feature type="strand" evidence="17">
    <location>
        <begin position="615"/>
        <end position="623"/>
    </location>
</feature>
<feature type="strand" evidence="17">
    <location>
        <begin position="626"/>
        <end position="632"/>
    </location>
</feature>
<feature type="strand" evidence="17">
    <location>
        <begin position="638"/>
        <end position="640"/>
    </location>
</feature>
<feature type="strand" evidence="17">
    <location>
        <begin position="656"/>
        <end position="664"/>
    </location>
</feature>
<feature type="helix" evidence="17">
    <location>
        <begin position="665"/>
        <end position="667"/>
    </location>
</feature>
<feature type="strand" evidence="17">
    <location>
        <begin position="669"/>
        <end position="677"/>
    </location>
</feature>
<feature type="turn" evidence="17">
    <location>
        <begin position="689"/>
        <end position="691"/>
    </location>
</feature>
<feature type="strand" evidence="17">
    <location>
        <begin position="697"/>
        <end position="706"/>
    </location>
</feature>
<keyword id="KW-0002">3D-structure</keyword>
<keyword id="KW-0998">Cell outer membrane</keyword>
<keyword id="KW-0903">Direct protein sequencing</keyword>
<keyword id="KW-0449">Lipoprotein</keyword>
<keyword id="KW-0472">Membrane</keyword>
<keyword id="KW-0564">Palmitate</keyword>
<keyword id="KW-0675">Receptor</keyword>
<keyword id="KW-0732">Signal</keyword>
<keyword id="KW-0843">Virulence</keyword>
<reference key="1">
    <citation type="journal article" date="1993" name="Gene">
        <title>Cloning and characterization of Neisseria meningitidis genes encoding the transferrin-binding proteins Tbp1 and Tbp2.</title>
        <authorList>
            <person name="Legrain M."/>
            <person name="Mazarin V."/>
            <person name="Irwin S.W."/>
            <person name="Bouchon B."/>
            <person name="Quentin-Millet M.-J."/>
            <person name="Jacobs E."/>
            <person name="Schryvers A.B."/>
        </authorList>
    </citation>
    <scope>NUCLEOTIDE SEQUENCE [GENOMIC DNA]</scope>
    <scope>PROTEIN SEQUENCE OF 22-33; 58-66; 144-162 AND 178-192</scope>
    <scope>TRANSFERRIN-BINDING</scope>
    <scope>SUBCELLULAR LOCATION</scope>
    <source>
        <strain>CCUG 37608 / M982 / Serogroup B / Serotype 9</strain>
    </source>
</reference>
<reference key="2">
    <citation type="journal article" date="1990" name="Can. J. Microbiol.">
        <title>Receptors for transferrin in pathogenic bacteria are specific for the host's protein.</title>
        <authorList>
            <person name="Schryvers A.B."/>
            <person name="Gonzalez G.C."/>
        </authorList>
    </citation>
    <scope>HOST-SPECIFICITY</scope>
</reference>
<reference evidence="12 13" key="3">
    <citation type="journal article" date="2012" name="Nat. Struct. Mol. Biol.">
        <title>The structural basis of transferrin sequestration by transferrin-binding protein B.</title>
        <authorList>
            <person name="Calmettes C."/>
            <person name="Alcantara J."/>
            <person name="Yu R.H."/>
            <person name="Schryvers A.B."/>
            <person name="Moraes T.F."/>
        </authorList>
    </citation>
    <scope>X-RAY CRYSTALLOGRAPHY (2.14 ANGSTROMS) OF 56-711 ALONE AND IN COMPLEX WITH HUMAN TRANSFERRIN</scope>
    <scope>FUNCTION</scope>
    <scope>TRANSFERRIN-BINDING</scope>
    <scope>SUBUNIT</scope>
    <scope>DOMAIN</scope>
    <scope>MUTAGENESIS OF ARG-219 AND GLU-241</scope>
    <source>
        <strain>CCUG 37608 / M982 / Serogroup B / Serotype 9</strain>
    </source>
</reference>
<reference evidence="14" key="4">
    <citation type="submission" date="2016-06" db="PDB data bank">
        <title>Engineered hybrid transferrin binding protein antigens for protection against Neisseria meningitidis.</title>
        <authorList>
            <person name="Fegan J.E."/>
            <person name="Calmettes C."/>
            <person name="Yu R.-H."/>
            <person name="Moraes T.F.M."/>
            <person name="Schryvers A.B."/>
        </authorList>
    </citation>
    <scope>X-RAY CRYSTALLOGRAPHY (2.10 ANGSTROMS) OF 396-711</scope>
</reference>
<protein>
    <recommendedName>
        <fullName evidence="9">Transferrin-binding protein B</fullName>
        <shortName evidence="9">TbpB</shortName>
    </recommendedName>
    <alternativeName>
        <fullName evidence="7">TbpB receptor</fullName>
    </alternativeName>
    <alternativeName>
        <fullName evidence="8">Transferrin-binding protein 2</fullName>
        <shortName>TBP-2</shortName>
    </alternativeName>
</protein>
<organism>
    <name type="scientific">Neisseria meningitidis serogroup B</name>
    <dbReference type="NCBI Taxonomy" id="491"/>
    <lineage>
        <taxon>Bacteria</taxon>
        <taxon>Pseudomonadati</taxon>
        <taxon>Pseudomonadota</taxon>
        <taxon>Betaproteobacteria</taxon>
        <taxon>Neisseriales</taxon>
        <taxon>Neisseriaceae</taxon>
        <taxon>Neisseria</taxon>
    </lineage>
</organism>
<dbReference type="EMBL" id="Z15130">
    <property type="protein sequence ID" value="CAA78832.1"/>
    <property type="molecule type" value="Genomic_DNA"/>
</dbReference>
<dbReference type="PIR" id="JN0820">
    <property type="entry name" value="JN0820"/>
</dbReference>
<dbReference type="PDB" id="3VE1">
    <property type="method" value="X-ray"/>
    <property type="resolution" value="2.96 A"/>
    <property type="chains" value="A/C=56-711"/>
</dbReference>
<dbReference type="PDB" id="3VE2">
    <property type="method" value="X-ray"/>
    <property type="resolution" value="2.14 A"/>
    <property type="chains" value="A/B=56-711"/>
</dbReference>
<dbReference type="PDB" id="5KKX">
    <property type="method" value="X-ray"/>
    <property type="resolution" value="2.10 A"/>
    <property type="chains" value="A/B=396-711"/>
</dbReference>
<dbReference type="PDBsum" id="3VE1"/>
<dbReference type="PDBsum" id="3VE2"/>
<dbReference type="PDBsum" id="5KKX"/>
<dbReference type="SMR" id="Q09057"/>
<dbReference type="DIP" id="DIP-59922N"/>
<dbReference type="IntAct" id="Q09057">
    <property type="interactions" value="1"/>
</dbReference>
<dbReference type="EvolutionaryTrace" id="Q09057"/>
<dbReference type="GO" id="GO:0009279">
    <property type="term" value="C:cell outer membrane"/>
    <property type="evidence" value="ECO:0007669"/>
    <property type="project" value="UniProtKB-SubCell"/>
</dbReference>
<dbReference type="GO" id="GO:0009986">
    <property type="term" value="C:cell surface"/>
    <property type="evidence" value="ECO:0007669"/>
    <property type="project" value="UniProtKB-SubCell"/>
</dbReference>
<dbReference type="Gene3D" id="2.40.128.240">
    <property type="match status" value="1"/>
</dbReference>
<dbReference type="Gene3D" id="2.40.128.250">
    <property type="match status" value="1"/>
</dbReference>
<dbReference type="Gene3D" id="2.40.160.90">
    <property type="match status" value="2"/>
</dbReference>
<dbReference type="InterPro" id="IPR011250">
    <property type="entry name" value="OMP/PagP_b-brl"/>
</dbReference>
<dbReference type="InterPro" id="IPR001677">
    <property type="entry name" value="TbpB_B_D"/>
</dbReference>
<dbReference type="InterPro" id="IPR035316">
    <property type="entry name" value="TbpB_C-lobe"/>
</dbReference>
<dbReference type="InterPro" id="IPR038197">
    <property type="entry name" value="TbpB_C-lobe_sf"/>
</dbReference>
<dbReference type="InterPro" id="IPR035313">
    <property type="entry name" value="TbpB_N-lobe"/>
</dbReference>
<dbReference type="InterPro" id="IPR038669">
    <property type="entry name" value="TbpB_N-lobe_sf"/>
</dbReference>
<dbReference type="Pfam" id="PF17484">
    <property type="entry name" value="TbpB_A"/>
    <property type="match status" value="1"/>
</dbReference>
<dbReference type="Pfam" id="PF01298">
    <property type="entry name" value="TbpB_B_D"/>
    <property type="match status" value="2"/>
</dbReference>
<dbReference type="Pfam" id="PF17483">
    <property type="entry name" value="TbpB_C"/>
    <property type="match status" value="1"/>
</dbReference>
<dbReference type="SUPFAM" id="SSF56925">
    <property type="entry name" value="OMPA-like"/>
    <property type="match status" value="2"/>
</dbReference>
<sequence>MNNPLVNQAAMVLPVFLLSACLGGGGSFDLDSVDTEAPRPAPKYQDVSSEKPQAQKDQGGYGFAMRLKRRNWYPGAEESEVKLNESDWEATGLPTKPKELPKRQKSVIEKVETDGDSDIYSSPYLTPSNHQNGSAGNGVNQPKNQATGHENFQYVYSGWFYKHAASEKDFSNKKIKSGDDGYIFYHGEKPSRQLPASGKVIYKGVWHFVTDTKKGQDFREIIQPSKKQGDRYSGFSGDGSEEYSNKNESTLKDDHEGYGFTSNLEVDFGNKKLTGKLIRNNASLNNNTNNDKHTTQYYSLDAQITGNRFNGTATATDKKENETKLHPFVSDSSSLSGGFFGPQGEELGFRFLSDDQKVAVVGSAKTKDKLENGAAASGSTGAAASGGAAGTSSENSKLTTVLDAVELTLNDKKIKNLDNFSNAAQLVVDGIMIPLLPKDSESGNTQADKGKNGGTEFTRKFEHTPESDKKDAQAGTQTNGAQTASNTAGDTNGKTKTYEVEVCCSNLNYLKYGMLTRKNSKSAMQAGGNSSQADAKTEQVEQSMFLQGERTDEKEIPTDQNVVYRGSWYGHIANGTSWSGNASDKEGGNRAEFTVNFADKKITGKLTAENRQAQTFTIEGMIQGNGFEGTAKTAESGFDLDQKNTTRTPKAYITDAKVKGGFYGPKAEELGGWFAYPGDKQTEKATATSSDGNSASSATVVFGAKRQQPVQ</sequence>
<proteinExistence type="evidence at protein level"/>
<comment type="function">
    <text evidence="5">Neisseria acquires iron by extracting it from serum transferrin (TF) in its human host. Acts as a TF receptor and is required for TF utilization. Involved in the initial capture of TF. Helps select only those TF molecules that can be used as an iron source and concentrates them on the cell surface, maintaining the iron-loaded status of the TF C-terminal lobe until its delivery to TbpA.</text>
</comment>
<comment type="subunit">
    <text evidence="1 2 5">Binds only human holo-transferrin (TF), via the TF C-terminus (PubMed:22343719). Forms a large complex with TbpA and TF (By similarity). Interacts via its C-terminal domain with Slam1 (By similarity).</text>
</comment>
<comment type="interaction">
    <interactant intactId="EBI-15970048">
        <id>Q09057</id>
    </interactant>
    <interactant intactId="EBI-714319">
        <id>P02787</id>
        <label>TF</label>
    </interactant>
    <organismsDiffer>true</organismsDiffer>
    <experiments>3</experiments>
</comment>
<comment type="subcellular location">
    <subcellularLocation>
        <location evidence="11">Cell outer membrane</location>
        <topology evidence="11">Lipid-anchor</topology>
    </subcellularLocation>
    <subcellularLocation>
        <location evidence="6 10">Cell surface</location>
    </subcellularLocation>
</comment>
<comment type="induction">
    <text>By iron starvation.</text>
</comment>
<comment type="domain">
    <text evidence="5">Has 2 lobes, each of which has an 8-strand beta barrel flanked on their N-terminus by a 4-strand handle domain. TbpB stabilizes the TF holo C-terminal lobe's conformation.</text>
</comment>
<comment type="miscellaneous">
    <text evidence="4">N.meningitidis cells will only bind to human TF, not bovine or porcine TF, explaining at least in part the bacteria's inability to cause infection in non-human hosts.</text>
</comment>
<comment type="similarity">
    <text evidence="9">Belongs to the TbpB family. Isotype II subfamily.</text>
</comment>
<accession>Q09057</accession>
<evidence type="ECO:0000250" key="1">
    <source>
        <dbReference type="UniProtKB" id="Q06988"/>
    </source>
</evidence>
<evidence type="ECO:0000250" key="2">
    <source>
        <dbReference type="UniProtKB" id="Q9K0V0"/>
    </source>
</evidence>
<evidence type="ECO:0000256" key="3">
    <source>
        <dbReference type="SAM" id="MobiDB-lite"/>
    </source>
</evidence>
<evidence type="ECO:0000269" key="4">
    <source>
    </source>
</evidence>
<evidence type="ECO:0000269" key="5">
    <source>
    </source>
</evidence>
<evidence type="ECO:0000269" key="6">
    <source>
    </source>
</evidence>
<evidence type="ECO:0000303" key="7">
    <source>
    </source>
</evidence>
<evidence type="ECO:0000303" key="8">
    <source>
    </source>
</evidence>
<evidence type="ECO:0000305" key="9"/>
<evidence type="ECO:0000305" key="10">
    <source>
    </source>
</evidence>
<evidence type="ECO:0000305" key="11">
    <source>
    </source>
</evidence>
<evidence type="ECO:0007744" key="12">
    <source>
        <dbReference type="PDB" id="3VE1"/>
    </source>
</evidence>
<evidence type="ECO:0007744" key="13">
    <source>
        <dbReference type="PDB" id="3VE2"/>
    </source>
</evidence>
<evidence type="ECO:0007744" key="14">
    <source>
        <dbReference type="PDB" id="5KKX"/>
    </source>
</evidence>
<evidence type="ECO:0007829" key="15">
    <source>
        <dbReference type="PDB" id="3VE1"/>
    </source>
</evidence>
<evidence type="ECO:0007829" key="16">
    <source>
        <dbReference type="PDB" id="3VE2"/>
    </source>
</evidence>
<evidence type="ECO:0007829" key="17">
    <source>
        <dbReference type="PDB" id="5KKX"/>
    </source>
</evidence>